<proteinExistence type="inferred from homology"/>
<feature type="chain" id="PRO_1000049741" description="Large ribosomal subunit protein bL19">
    <location>
        <begin position="1"/>
        <end position="117"/>
    </location>
</feature>
<evidence type="ECO:0000255" key="1">
    <source>
        <dbReference type="HAMAP-Rule" id="MF_00402"/>
    </source>
</evidence>
<evidence type="ECO:0000305" key="2"/>
<reference key="1">
    <citation type="submission" date="2006-08" db="EMBL/GenBank/DDBJ databases">
        <title>Complete sequence of Shewanella frigidimarina NCIMB 400.</title>
        <authorList>
            <consortium name="US DOE Joint Genome Institute"/>
            <person name="Copeland A."/>
            <person name="Lucas S."/>
            <person name="Lapidus A."/>
            <person name="Barry K."/>
            <person name="Detter J.C."/>
            <person name="Glavina del Rio T."/>
            <person name="Hammon N."/>
            <person name="Israni S."/>
            <person name="Dalin E."/>
            <person name="Tice H."/>
            <person name="Pitluck S."/>
            <person name="Fredrickson J.K."/>
            <person name="Kolker E."/>
            <person name="McCuel L.A."/>
            <person name="DiChristina T."/>
            <person name="Nealson K.H."/>
            <person name="Newman D."/>
            <person name="Tiedje J.M."/>
            <person name="Zhou J."/>
            <person name="Romine M.F."/>
            <person name="Culley D.E."/>
            <person name="Serres M."/>
            <person name="Chertkov O."/>
            <person name="Brettin T."/>
            <person name="Bruce D."/>
            <person name="Han C."/>
            <person name="Tapia R."/>
            <person name="Gilna P."/>
            <person name="Schmutz J."/>
            <person name="Larimer F."/>
            <person name="Land M."/>
            <person name="Hauser L."/>
            <person name="Kyrpides N."/>
            <person name="Mikhailova N."/>
            <person name="Richardson P."/>
        </authorList>
    </citation>
    <scope>NUCLEOTIDE SEQUENCE [LARGE SCALE GENOMIC DNA]</scope>
    <source>
        <strain>NCIMB 400</strain>
    </source>
</reference>
<protein>
    <recommendedName>
        <fullName evidence="1">Large ribosomal subunit protein bL19</fullName>
    </recommendedName>
    <alternativeName>
        <fullName evidence="2">50S ribosomal protein L19</fullName>
    </alternativeName>
</protein>
<sequence length="117" mass="13351">MNNIIKMLNDEQMKTDVPDFGAGDTVVVQVRVKEGEKERLQAFEGLVIAKRNRGLHSAFTVRKISNGEGVERAFQTHSPLIASIEVKRRGRVRRAKLYYLRERSGKSARIREKLATK</sequence>
<keyword id="KW-1185">Reference proteome</keyword>
<keyword id="KW-0687">Ribonucleoprotein</keyword>
<keyword id="KW-0689">Ribosomal protein</keyword>
<accession>Q07Z08</accession>
<dbReference type="EMBL" id="CP000447">
    <property type="protein sequence ID" value="ABI72756.1"/>
    <property type="molecule type" value="Genomic_DNA"/>
</dbReference>
<dbReference type="RefSeq" id="WP_011638365.1">
    <property type="nucleotide sequence ID" value="NC_008345.1"/>
</dbReference>
<dbReference type="SMR" id="Q07Z08"/>
<dbReference type="STRING" id="318167.Sfri_2917"/>
<dbReference type="GeneID" id="90569437"/>
<dbReference type="KEGG" id="sfr:Sfri_2917"/>
<dbReference type="eggNOG" id="COG0335">
    <property type="taxonomic scope" value="Bacteria"/>
</dbReference>
<dbReference type="HOGENOM" id="CLU_103507_2_2_6"/>
<dbReference type="OrthoDB" id="9803541at2"/>
<dbReference type="Proteomes" id="UP000000684">
    <property type="component" value="Chromosome"/>
</dbReference>
<dbReference type="GO" id="GO:0022625">
    <property type="term" value="C:cytosolic large ribosomal subunit"/>
    <property type="evidence" value="ECO:0007669"/>
    <property type="project" value="TreeGrafter"/>
</dbReference>
<dbReference type="GO" id="GO:0003735">
    <property type="term" value="F:structural constituent of ribosome"/>
    <property type="evidence" value="ECO:0007669"/>
    <property type="project" value="InterPro"/>
</dbReference>
<dbReference type="GO" id="GO:0006412">
    <property type="term" value="P:translation"/>
    <property type="evidence" value="ECO:0007669"/>
    <property type="project" value="UniProtKB-UniRule"/>
</dbReference>
<dbReference type="FunFam" id="2.30.30.790:FF:000001">
    <property type="entry name" value="50S ribosomal protein L19"/>
    <property type="match status" value="1"/>
</dbReference>
<dbReference type="Gene3D" id="2.30.30.790">
    <property type="match status" value="1"/>
</dbReference>
<dbReference type="HAMAP" id="MF_00402">
    <property type="entry name" value="Ribosomal_bL19"/>
    <property type="match status" value="1"/>
</dbReference>
<dbReference type="InterPro" id="IPR001857">
    <property type="entry name" value="Ribosomal_bL19"/>
</dbReference>
<dbReference type="InterPro" id="IPR018257">
    <property type="entry name" value="Ribosomal_bL19_CS"/>
</dbReference>
<dbReference type="InterPro" id="IPR038657">
    <property type="entry name" value="Ribosomal_bL19_sf"/>
</dbReference>
<dbReference type="InterPro" id="IPR008991">
    <property type="entry name" value="Translation_prot_SH3-like_sf"/>
</dbReference>
<dbReference type="NCBIfam" id="TIGR01024">
    <property type="entry name" value="rplS_bact"/>
    <property type="match status" value="1"/>
</dbReference>
<dbReference type="PANTHER" id="PTHR15680:SF9">
    <property type="entry name" value="LARGE RIBOSOMAL SUBUNIT PROTEIN BL19M"/>
    <property type="match status" value="1"/>
</dbReference>
<dbReference type="PANTHER" id="PTHR15680">
    <property type="entry name" value="RIBOSOMAL PROTEIN L19"/>
    <property type="match status" value="1"/>
</dbReference>
<dbReference type="Pfam" id="PF01245">
    <property type="entry name" value="Ribosomal_L19"/>
    <property type="match status" value="1"/>
</dbReference>
<dbReference type="PIRSF" id="PIRSF002191">
    <property type="entry name" value="Ribosomal_L19"/>
    <property type="match status" value="1"/>
</dbReference>
<dbReference type="PRINTS" id="PR00061">
    <property type="entry name" value="RIBOSOMALL19"/>
</dbReference>
<dbReference type="SUPFAM" id="SSF50104">
    <property type="entry name" value="Translation proteins SH3-like domain"/>
    <property type="match status" value="1"/>
</dbReference>
<dbReference type="PROSITE" id="PS01015">
    <property type="entry name" value="RIBOSOMAL_L19"/>
    <property type="match status" value="1"/>
</dbReference>
<organism>
    <name type="scientific">Shewanella frigidimarina (strain NCIMB 400)</name>
    <dbReference type="NCBI Taxonomy" id="318167"/>
    <lineage>
        <taxon>Bacteria</taxon>
        <taxon>Pseudomonadati</taxon>
        <taxon>Pseudomonadota</taxon>
        <taxon>Gammaproteobacteria</taxon>
        <taxon>Alteromonadales</taxon>
        <taxon>Shewanellaceae</taxon>
        <taxon>Shewanella</taxon>
    </lineage>
</organism>
<comment type="function">
    <text evidence="1">This protein is located at the 30S-50S ribosomal subunit interface and may play a role in the structure and function of the aminoacyl-tRNA binding site.</text>
</comment>
<comment type="similarity">
    <text evidence="1">Belongs to the bacterial ribosomal protein bL19 family.</text>
</comment>
<name>RL19_SHEFN</name>
<gene>
    <name evidence="1" type="primary">rplS</name>
    <name type="ordered locus">Sfri_2917</name>
</gene>